<proteinExistence type="evidence at protein level"/>
<evidence type="ECO:0000250" key="1">
    <source>
        <dbReference type="UniProtKB" id="P43585"/>
    </source>
</evidence>
<evidence type="ECO:0000255" key="2"/>
<evidence type="ECO:0000255" key="3">
    <source>
        <dbReference type="PROSITE-ProRule" id="PRU00712"/>
    </source>
</evidence>
<evidence type="ECO:0000255" key="4">
    <source>
        <dbReference type="PROSITE-ProRule" id="PRU00714"/>
    </source>
</evidence>
<evidence type="ECO:0000256" key="5">
    <source>
        <dbReference type="SAM" id="MobiDB-lite"/>
    </source>
</evidence>
<evidence type="ECO:0000269" key="6">
    <source>
    </source>
</evidence>
<evidence type="ECO:0000269" key="7">
    <source>
    </source>
</evidence>
<evidence type="ECO:0000269" key="8">
    <source>
    </source>
</evidence>
<evidence type="ECO:0000269" key="9">
    <source>
    </source>
</evidence>
<evidence type="ECO:0000269" key="10">
    <source>
    </source>
</evidence>
<evidence type="ECO:0000269" key="11">
    <source>
    </source>
</evidence>
<evidence type="ECO:0000269" key="12">
    <source>
    </source>
</evidence>
<evidence type="ECO:0000269" key="13">
    <source>
    </source>
</evidence>
<evidence type="ECO:0000269" key="14">
    <source>
    </source>
</evidence>
<evidence type="ECO:0000269" key="15">
    <source>
    </source>
</evidence>
<evidence type="ECO:0000303" key="16">
    <source>
    </source>
</evidence>
<evidence type="ECO:0000305" key="17"/>
<evidence type="ECO:0000305" key="18">
    <source>
    </source>
</evidence>
<evidence type="ECO:0000312" key="19">
    <source>
        <dbReference type="Araport" id="AT3G23430"/>
    </source>
</evidence>
<evidence type="ECO:0000312" key="20">
    <source>
        <dbReference type="EMBL" id="BAB02287.1"/>
    </source>
</evidence>
<organism>
    <name type="scientific">Arabidopsis thaliana</name>
    <name type="common">Mouse-ear cress</name>
    <dbReference type="NCBI Taxonomy" id="3702"/>
    <lineage>
        <taxon>Eukaryota</taxon>
        <taxon>Viridiplantae</taxon>
        <taxon>Streptophyta</taxon>
        <taxon>Embryophyta</taxon>
        <taxon>Tracheophyta</taxon>
        <taxon>Spermatophyta</taxon>
        <taxon>Magnoliopsida</taxon>
        <taxon>eudicotyledons</taxon>
        <taxon>Gunneridae</taxon>
        <taxon>Pentapetalae</taxon>
        <taxon>rosids</taxon>
        <taxon>malvids</taxon>
        <taxon>Brassicales</taxon>
        <taxon>Brassicaceae</taxon>
        <taxon>Camelineae</taxon>
        <taxon>Arabidopsis</taxon>
    </lineage>
</organism>
<sequence length="782" mass="90537">MVKFSKELEAQLIPEWKEAFVNYCLLKKQIKKIKTSRKPKPASHYPIGHHSDFGRSLFDPVRKLARTFSDKLFSNSEKPEILQVRRRRGSSETGDDVDEIYQTELVQLFSEEDEVKVFFARLDEELNKVNQFHKPKETEFLERGEILKKQLETLAELKQILSDRKKRNLSGSNSHRSFSSSVRNSDFSAGSPGELSEIQSETSRTDEIIEALERNGVSFINSATRSKTKGGKPKMSLRVDIPDAVAGAEGGIARSIATAMSVLWEELVNNPRSDFTNWKNIQSAEKKIRSAFVELYRGLGLLKTYSSLNMIAFTKIMKKFDKVAGQNASSTYLKVVKRSQFISSDKVVRLMDEVESIFTKHFANNDRKKAMKFLKPHQTKDSHMVTFFVGLFTGCFISLFVIYIILAHLSGIFTSSDQVSYLETVYPVFSVFALLSLHMFMYGCNLYMWKNTRINYTFIFEFAPNTALRYRDAFLMGTTFMTSVVAAMVIHLILRASGFSASQVDTIPGILLLIFICVLICPFNTFYRPTRFCFIRILRKIVCSPFYKVLMVDFFMGDQLTSQIPLLRHLETTGCYFLAQSFKTHEYNTCKNGRYYREFAYLISFLPYFWRAMQCVRRWWDESNPDHLINMGKYVSAMVAAGVRITYARENNDLWLTMVLVSSVVATIYQLYWDFVKDWGLLNPKSKNPWLRDNLVLRNKNFYYLSIALNLVLRVAWIETIMRFRVSPVQSHLLDFFLASLEVIRRGHWNFYRVENEHLNNVGQFRAVKTVPLPFLDRDSDG</sequence>
<dbReference type="EMBL" id="AF474076">
    <property type="protein sequence ID" value="AAM09652.1"/>
    <property type="molecule type" value="mRNA"/>
</dbReference>
<dbReference type="EMBL" id="AB015474">
    <property type="protein sequence ID" value="BAB02287.1"/>
    <property type="status" value="ALT_SEQ"/>
    <property type="molecule type" value="Genomic_DNA"/>
</dbReference>
<dbReference type="EMBL" id="CP002686">
    <property type="protein sequence ID" value="AEE76764.1"/>
    <property type="molecule type" value="Genomic_DNA"/>
</dbReference>
<dbReference type="RefSeq" id="NP_188985.2">
    <property type="nucleotide sequence ID" value="NM_113246.5"/>
</dbReference>
<dbReference type="SMR" id="Q8S403"/>
<dbReference type="BioGRID" id="7256">
    <property type="interactions" value="4"/>
</dbReference>
<dbReference type="FunCoup" id="Q8S403">
    <property type="interactions" value="2956"/>
</dbReference>
<dbReference type="STRING" id="3702.Q8S403"/>
<dbReference type="TCDB" id="2.A.94.1.1">
    <property type="family name" value="the phosphate permease (pho1) family"/>
</dbReference>
<dbReference type="iPTMnet" id="Q8S403"/>
<dbReference type="PaxDb" id="3702-AT3G23430.1"/>
<dbReference type="ProteomicsDB" id="236351"/>
<dbReference type="EnsemblPlants" id="AT3G23430.1">
    <property type="protein sequence ID" value="AT3G23430.1"/>
    <property type="gene ID" value="AT3G23430"/>
</dbReference>
<dbReference type="GeneID" id="821924"/>
<dbReference type="Gramene" id="AT3G23430.1">
    <property type="protein sequence ID" value="AT3G23430.1"/>
    <property type="gene ID" value="AT3G23430"/>
</dbReference>
<dbReference type="KEGG" id="ath:AT3G23430"/>
<dbReference type="Araport" id="AT3G23430"/>
<dbReference type="TAIR" id="AT3G23430">
    <property type="gene designation" value="PHO1"/>
</dbReference>
<dbReference type="eggNOG" id="KOG1162">
    <property type="taxonomic scope" value="Eukaryota"/>
</dbReference>
<dbReference type="HOGENOM" id="CLU_006116_2_0_1"/>
<dbReference type="InParanoid" id="Q8S403"/>
<dbReference type="OMA" id="ETSHFYT"/>
<dbReference type="OrthoDB" id="9970435at2759"/>
<dbReference type="PhylomeDB" id="Q8S403"/>
<dbReference type="PRO" id="PR:Q8S403"/>
<dbReference type="Proteomes" id="UP000006548">
    <property type="component" value="Chromosome 3"/>
</dbReference>
<dbReference type="ExpressionAtlas" id="Q8S403">
    <property type="expression patterns" value="baseline and differential"/>
</dbReference>
<dbReference type="GO" id="GO:0005789">
    <property type="term" value="C:endoplasmic reticulum membrane"/>
    <property type="evidence" value="ECO:0007669"/>
    <property type="project" value="UniProtKB-SubCell"/>
</dbReference>
<dbReference type="GO" id="GO:0005794">
    <property type="term" value="C:Golgi apparatus"/>
    <property type="evidence" value="ECO:0000314"/>
    <property type="project" value="TAIR"/>
</dbReference>
<dbReference type="GO" id="GO:0000139">
    <property type="term" value="C:Golgi membrane"/>
    <property type="evidence" value="ECO:0007669"/>
    <property type="project" value="UniProtKB-SubCell"/>
</dbReference>
<dbReference type="GO" id="GO:0005886">
    <property type="term" value="C:plasma membrane"/>
    <property type="evidence" value="ECO:0000314"/>
    <property type="project" value="TAIR"/>
</dbReference>
<dbReference type="GO" id="GO:0005802">
    <property type="term" value="C:trans-Golgi network"/>
    <property type="evidence" value="ECO:0000314"/>
    <property type="project" value="TAIR"/>
</dbReference>
<dbReference type="GO" id="GO:0000822">
    <property type="term" value="F:inositol hexakisphosphate binding"/>
    <property type="evidence" value="ECO:0000314"/>
    <property type="project" value="UniProtKB"/>
</dbReference>
<dbReference type="GO" id="GO:0016036">
    <property type="term" value="P:cellular response to phosphate starvation"/>
    <property type="evidence" value="ECO:0000270"/>
    <property type="project" value="TAIR"/>
</dbReference>
<dbReference type="GO" id="GO:0030643">
    <property type="term" value="P:intracellular phosphate ion homeostasis"/>
    <property type="evidence" value="ECO:0000315"/>
    <property type="project" value="UniProtKB"/>
</dbReference>
<dbReference type="GO" id="GO:0006817">
    <property type="term" value="P:phosphate ion transport"/>
    <property type="evidence" value="ECO:0007669"/>
    <property type="project" value="UniProtKB-KW"/>
</dbReference>
<dbReference type="GO" id="GO:0006799">
    <property type="term" value="P:polyphosphate biosynthetic process"/>
    <property type="evidence" value="ECO:0000315"/>
    <property type="project" value="UniProtKB"/>
</dbReference>
<dbReference type="CDD" id="cd14476">
    <property type="entry name" value="SPX_PHO1_like"/>
    <property type="match status" value="1"/>
</dbReference>
<dbReference type="InterPro" id="IPR004342">
    <property type="entry name" value="EXS_C"/>
</dbReference>
<dbReference type="InterPro" id="IPR052486">
    <property type="entry name" value="PHO1"/>
</dbReference>
<dbReference type="InterPro" id="IPR034092">
    <property type="entry name" value="PHO1_SPX"/>
</dbReference>
<dbReference type="InterPro" id="IPR004331">
    <property type="entry name" value="SPX_dom"/>
</dbReference>
<dbReference type="PANTHER" id="PTHR48477">
    <property type="entry name" value="PHOSPHATE TRANSPORTER PHO1"/>
    <property type="match status" value="1"/>
</dbReference>
<dbReference type="PANTHER" id="PTHR48477:SF1">
    <property type="entry name" value="PHOSPHATE TRANSPORTER PHO1"/>
    <property type="match status" value="1"/>
</dbReference>
<dbReference type="Pfam" id="PF03124">
    <property type="entry name" value="EXS"/>
    <property type="match status" value="1"/>
</dbReference>
<dbReference type="Pfam" id="PF03105">
    <property type="entry name" value="SPX"/>
    <property type="match status" value="1"/>
</dbReference>
<dbReference type="PROSITE" id="PS51380">
    <property type="entry name" value="EXS"/>
    <property type="match status" value="1"/>
</dbReference>
<dbReference type="PROSITE" id="PS51382">
    <property type="entry name" value="SPX"/>
    <property type="match status" value="1"/>
</dbReference>
<comment type="function">
    <text evidence="6 7 9 10 11 15">Inositol polyphosphate sensor that associates with transcription factors to regulate inorganic phosphate (Pi) starvation responses (PubMed:27080106). Probably acts by binding inositol polyphosphate via its SPX domain (PubMed:27080106). Acts as a Pi exporter, mediating efflux of Pi out of cells (PubMed:21309867, PubMed:22449068). Transfers Pi from the epidermal and cortical cells to the root xylem vessels (PubMed:11971143). Involved in the transfer of Pi from roots to shoots (PubMed:11971143, PubMed:17461783). Involved in abscisic acid (ABA) induction of stomatal closure and ABA repression of stomatal opening (PubMed:22612335).</text>
</comment>
<comment type="subunit">
    <text evidence="12">Interacts with PHO2.</text>
</comment>
<comment type="subcellular location">
    <subcellularLocation>
        <location evidence="10 12 14">Golgi apparatus membrane</location>
        <topology evidence="17">Multi-pass membrane protein</topology>
    </subcellularLocation>
    <subcellularLocation>
        <location evidence="10 14">Golgi apparatus</location>
        <location evidence="10 14">trans-Golgi network membrane</location>
        <topology evidence="17">Multi-pass membrane protein</topology>
    </subcellularLocation>
    <subcellularLocation>
        <location evidence="12">Endoplasmic reticulum membrane</location>
        <topology evidence="17">Multi-pass membrane protein</topology>
    </subcellularLocation>
    <text evidence="10">In transgenic plants, relocates partially to the plasma membrane in the presence of high extracellular Pi.</text>
</comment>
<comment type="tissue specificity">
    <text evidence="6 11">Predominantly in roots, but also weak expression in the lower part of the hypocotyl (PubMed:11971143). In the stellar cells, including the pericycle and xylem parenchyma cells, but not in the cortical or epidermal cells (PubMed:11971143). Expressed in guard cells (PubMed:22612335).</text>
</comment>
<comment type="induction">
    <text evidence="8 13">Up-regulated by sucrose and Pi deficiency in roots (PubMed:18094993). Down-regulated by auxin, cytokinin and abscisic acid (ABA) (PubMed:18094993). Up-regulated in leaves following treatment with ABA (PubMed:22612335). Down-regulated by the transcription factors WRKY6 and WRKY42 (PubMed:25733771).</text>
</comment>
<comment type="domain">
    <text evidence="14">The EXS domain is essential for Pi efflux out of cells and is necessary for the endomembrane localization.</text>
</comment>
<comment type="domain">
    <text>The SPX domain provides a basic binding surface for inositol polyphosphate signaling molecules (PubMed:27080106).</text>
</comment>
<comment type="PTM">
    <text evidence="12">PHO1 degradation is PHO2 dependent and involves multivesicular body-mediated vacuolar proteolysis (PubMed:22634761).</text>
</comment>
<comment type="disruption phenotype">
    <text evidence="6 7">Strong reduction in plant size and biomass. Severe deficiency in shoot Pi level, but normal root Pi content.</text>
</comment>
<comment type="miscellaneous">
    <text>Pi content in shoot of pho1 mutant can be restored to wild-type levels after treatment with cytokinins.</text>
</comment>
<comment type="similarity">
    <text evidence="17">Belongs to the SYG1 (TC 2.A.94) family.</text>
</comment>
<comment type="sequence caution" evidence="17">
    <conflict type="erroneous gene model prediction">
        <sequence resource="EMBL-CDS" id="BAB02287"/>
    </conflict>
</comment>
<gene>
    <name evidence="16" type="primary">PHO1</name>
    <name evidence="19" type="ordered locus">At3g23430</name>
    <name evidence="20" type="ORF">MLM24.26</name>
</gene>
<keyword id="KW-0256">Endoplasmic reticulum</keyword>
<keyword id="KW-0333">Golgi apparatus</keyword>
<keyword id="KW-0472">Membrane</keyword>
<keyword id="KW-0592">Phosphate transport</keyword>
<keyword id="KW-1185">Reference proteome</keyword>
<keyword id="KW-0812">Transmembrane</keyword>
<keyword id="KW-1133">Transmembrane helix</keyword>
<keyword id="KW-0813">Transport</keyword>
<protein>
    <recommendedName>
        <fullName evidence="16">Phosphate transporter PHO1</fullName>
    </recommendedName>
    <alternativeName>
        <fullName evidence="16">Protein PHO1</fullName>
        <shortName evidence="16">AtPHO1</shortName>
    </alternativeName>
</protein>
<reference key="1">
    <citation type="journal article" date="2002" name="Plant Cell">
        <title>Identification and characterization of the Arabidopsis PHO1 gene involved in phosphate loading to the xylem.</title>
        <authorList>
            <person name="Hamburger D."/>
            <person name="Rezzonico E."/>
            <person name="MacDonald-Comber Petetot J."/>
            <person name="Somerville C."/>
            <person name="Poirier Y."/>
        </authorList>
    </citation>
    <scope>NUCLEOTIDE SEQUENCE [MRNA]</scope>
    <scope>FUNCTION</scope>
    <scope>TISSUE SPECIFICITY</scope>
    <scope>DISRUPTION PHENOTYPE</scope>
    <source>
        <strain>cv. Columbia</strain>
    </source>
</reference>
<reference key="2">
    <citation type="journal article" date="2000" name="DNA Res.">
        <title>Structural analysis of Arabidopsis thaliana chromosome 3. I. Sequence features of the regions of 4,504,864 bp covered by sixty P1 and TAC clones.</title>
        <authorList>
            <person name="Sato S."/>
            <person name="Nakamura Y."/>
            <person name="Kaneko T."/>
            <person name="Katoh T."/>
            <person name="Asamizu E."/>
            <person name="Tabata S."/>
        </authorList>
    </citation>
    <scope>NUCLEOTIDE SEQUENCE [LARGE SCALE GENOMIC DNA]</scope>
    <source>
        <strain>cv. Columbia</strain>
    </source>
</reference>
<reference key="3">
    <citation type="journal article" date="2017" name="Plant J.">
        <title>Araport11: a complete reannotation of the Arabidopsis thaliana reference genome.</title>
        <authorList>
            <person name="Cheng C.Y."/>
            <person name="Krishnakumar V."/>
            <person name="Chan A.P."/>
            <person name="Thibaud-Nissen F."/>
            <person name="Schobel S."/>
            <person name="Town C.D."/>
        </authorList>
    </citation>
    <scope>GENOME REANNOTATION</scope>
    <source>
        <strain>cv. Columbia</strain>
    </source>
</reference>
<reference key="4">
    <citation type="journal article" date="2007" name="Plant J.">
        <title>Members of the PHO1 gene family show limited functional redundancy in phosphate transfer to the shoot, and are regulated by phosphate deficiency via distinct pathways.</title>
        <authorList>
            <person name="Stefanovic A."/>
            <person name="Ribot C."/>
            <person name="Rouached H."/>
            <person name="Wang Y."/>
            <person name="Chong J."/>
            <person name="Belbahri L."/>
            <person name="Delessert S."/>
            <person name="Poirier Y."/>
        </authorList>
    </citation>
    <scope>FUNCTION</scope>
    <scope>DISRUPTION PHENOTYPE</scope>
</reference>
<reference key="5">
    <citation type="journal article" date="2008" name="Planta">
        <title>Expression analyses of three members of the AtPHO1 family reveal differential interactions between signaling pathways involved in phosphate deficiency and the responses to auxin, cytokinin, and abscisic acid.</title>
        <authorList>
            <person name="Ribot C."/>
            <person name="Wang Y."/>
            <person name="Poirier Y."/>
        </authorList>
    </citation>
    <scope>INDUCTION</scope>
</reference>
<reference key="6">
    <citation type="journal article" date="2011" name="Plant J.">
        <title>Over-expression of PHO1 in Arabidopsis leaves reveals its role in mediating phosphate efflux.</title>
        <authorList>
            <person name="Stefanovic A."/>
            <person name="Arpat A.B."/>
            <person name="Bligny R."/>
            <person name="Gout E."/>
            <person name="Vidoudez C."/>
            <person name="Bensimon M."/>
            <person name="Poirier Y."/>
        </authorList>
    </citation>
    <scope>FUNCTION</scope>
</reference>
<reference key="7">
    <citation type="journal article" date="2012" name="Plant Cell">
        <title>PHO2-dependent degradation of PHO1 modulates phosphate homeostasis in Arabidopsis.</title>
        <authorList>
            <person name="Liu T.Y."/>
            <person name="Huang T.K."/>
            <person name="Tseng C.Y."/>
            <person name="Lai Y.S."/>
            <person name="Lin S.I."/>
            <person name="Lin W.Y."/>
            <person name="Chen J.W."/>
            <person name="Chiou T.J."/>
        </authorList>
    </citation>
    <scope>INTERACTION WITH PHO2</scope>
    <scope>MUTAGENESIS OF GLU-15 AND ALA-312</scope>
    <scope>SUBCELLULAR LOCATION</scope>
    <scope>DEGRADATION</scope>
</reference>
<reference key="8">
    <citation type="journal article" date="2012" name="Plant J.">
        <title>Functional expression of PHO1 to the Golgi and trans-Golgi network and its role in export of inorganic phosphate.</title>
        <authorList>
            <person name="Arpat A.B."/>
            <person name="Magliano P."/>
            <person name="Wege S."/>
            <person name="Rouached H."/>
            <person name="Stefanovic A."/>
            <person name="Poirier Y."/>
        </authorList>
    </citation>
    <scope>FUNCTION</scope>
    <scope>SUBCELLULAR LOCATION</scope>
</reference>
<reference key="9">
    <citation type="journal article" date="2012" name="Plant J.">
        <title>PHO1 expression in guard cells mediates the stomatal response to abscisic acid in Arabidopsis.</title>
        <authorList>
            <person name="Zimmerli C."/>
            <person name="Ribot C."/>
            <person name="Vavasseur A."/>
            <person name="Bauer H."/>
            <person name="Hedrich R."/>
            <person name="Poirier Y."/>
        </authorList>
    </citation>
    <scope>FUNCTION</scope>
    <scope>TISSUE SPECIFICITY</scope>
    <scope>INDUCTION BY ABSCISIC ACID</scope>
</reference>
<reference key="10">
    <citation type="journal article" date="2015" name="Plant Physiol.">
        <title>WRKY42 modulates phosphate homeostasis through regulating phosphate translocation and acquisition in Arabidopsis.</title>
        <authorList>
            <person name="Su T."/>
            <person name="Xu Q."/>
            <person name="Zhang F.C."/>
            <person name="Chen Y."/>
            <person name="Li L.Q."/>
            <person name="Wu W.H."/>
            <person name="Chen Y.F."/>
        </authorList>
    </citation>
    <scope>INDUCTION BY WRKY6 AND WRKY42</scope>
</reference>
<reference key="11">
    <citation type="journal article" date="2016" name="Plant Physiol.">
        <title>The EXS Domain of PHO1 Participates in the Response of Shoots to Phosphate Deficiency via a Root-to-Shoot Signal.</title>
        <authorList>
            <person name="Wege S."/>
            <person name="Khan G.A."/>
            <person name="Jung J.Y."/>
            <person name="Vogiatzaki E."/>
            <person name="Pradervand S."/>
            <person name="Aller I."/>
            <person name="Meyer A.J."/>
            <person name="Poirier Y."/>
        </authorList>
    </citation>
    <scope>TOPOLOGY</scope>
    <scope>DOMAIN</scope>
    <scope>SUBCELLULAR LOCATION</scope>
</reference>
<reference key="12">
    <citation type="journal article" date="2016" name="Science">
        <title>Control of eukaryotic phosphate homeostasis by inositol polyphosphate sensor domains.</title>
        <authorList>
            <person name="Wild R."/>
            <person name="Gerasimaite R."/>
            <person name="Jung J.Y."/>
            <person name="Truffault V."/>
            <person name="Pavlovic I."/>
            <person name="Schmidt A."/>
            <person name="Saiardi A."/>
            <person name="Jessen H.J."/>
            <person name="Poirier Y."/>
            <person name="Hothorn M."/>
            <person name="Mayer A."/>
        </authorList>
    </citation>
    <scope>FUNCTION</scope>
    <scope>DOMAIN</scope>
    <scope>MUTAGENESIS OF 1-MET--GLU-15; TYR-23; LYS-27; LYS-136; LYS-315; LYS-318; LYS-319 AND LYS-322</scope>
</reference>
<name>PHO1_ARATH</name>
<accession>Q8S403</accession>
<accession>Q9LW54</accession>
<feature type="chain" id="PRO_0000058403" description="Phosphate transporter PHO1">
    <location>
        <begin position="1"/>
        <end position="782"/>
    </location>
</feature>
<feature type="topological domain" description="Cytoplasmic" evidence="18">
    <location>
        <begin position="1"/>
        <end position="386"/>
    </location>
</feature>
<feature type="transmembrane region" description="Helical" evidence="2">
    <location>
        <begin position="387"/>
        <end position="407"/>
    </location>
</feature>
<feature type="topological domain" description="Lumenal" evidence="17">
    <location>
        <begin position="408"/>
        <end position="423"/>
    </location>
</feature>
<feature type="transmembrane region" description="Helical" evidence="2">
    <location>
        <begin position="424"/>
        <end position="444"/>
    </location>
</feature>
<feature type="topological domain" description="Cytoplasmic" evidence="17">
    <location>
        <begin position="445"/>
        <end position="473"/>
    </location>
</feature>
<feature type="transmembrane region" description="Helical" evidence="2">
    <location>
        <begin position="474"/>
        <end position="494"/>
    </location>
</feature>
<feature type="topological domain" description="Lumenal" evidence="17">
    <location>
        <begin position="495"/>
        <end position="506"/>
    </location>
</feature>
<feature type="transmembrane region" description="Helical" evidence="2">
    <location>
        <begin position="507"/>
        <end position="527"/>
    </location>
</feature>
<feature type="topological domain" description="Cytoplasmic" evidence="18">
    <location>
        <begin position="528"/>
        <end position="593"/>
    </location>
</feature>
<feature type="transmembrane region" description="Helical" evidence="2">
    <location>
        <begin position="594"/>
        <end position="614"/>
    </location>
</feature>
<feature type="topological domain" description="Lumenal" evidence="18">
    <location>
        <begin position="615"/>
        <end position="619"/>
    </location>
</feature>
<feature type="transmembrane region" description="Helical" evidence="2">
    <location>
        <begin position="620"/>
        <end position="639"/>
    </location>
</feature>
<feature type="topological domain" description="Cytoplasmic" evidence="18">
    <location>
        <begin position="640"/>
        <end position="782"/>
    </location>
</feature>
<feature type="domain" description="SPX" evidence="4">
    <location>
        <begin position="2"/>
        <end position="334"/>
    </location>
</feature>
<feature type="domain" description="EXS" evidence="3">
    <location>
        <begin position="591"/>
        <end position="782"/>
    </location>
</feature>
<feature type="region of interest" description="Disordered" evidence="5">
    <location>
        <begin position="165"/>
        <end position="202"/>
    </location>
</feature>
<feature type="region of interest" description="Important for inositol polyphosphate binding" evidence="1">
    <location>
        <begin position="315"/>
        <end position="322"/>
    </location>
</feature>
<feature type="compositionally biased region" description="Low complexity" evidence="5">
    <location>
        <begin position="170"/>
        <end position="188"/>
    </location>
</feature>
<feature type="site" description="Important for inositol polyphosphate binding" evidence="1">
    <location>
        <position position="23"/>
    </location>
</feature>
<feature type="site" description="Important for inositol polyphosphate binding" evidence="1">
    <location>
        <position position="27"/>
    </location>
</feature>
<feature type="mutagenesis site" description="Decreased Pi content and reduced growth." evidence="15">
    <location>
        <begin position="1"/>
        <end position="15"/>
    </location>
</feature>
<feature type="mutagenesis site" description="In pho1-5; disruption of Pi accumulation." evidence="12">
    <original>E</original>
    <variation>K</variation>
    <location>
        <position position="15"/>
    </location>
</feature>
<feature type="mutagenesis site" description="In PBC; decreased Pi content and reduced growth; when associated with A-27 and A-319." evidence="15">
    <original>Y</original>
    <variation>F</variation>
    <location>
        <position position="23"/>
    </location>
</feature>
<feature type="mutagenesis site" description="In PBC; decreased Pi content and reduced growth; when associated with F-23 and A-319." evidence="15">
    <original>K</original>
    <variation>A</variation>
    <location>
        <position position="27"/>
    </location>
</feature>
<feature type="mutagenesis site" description="No effect on Pi content and growth." evidence="15">
    <original>K</original>
    <variation>A</variation>
    <location>
        <position position="136"/>
    </location>
</feature>
<feature type="mutagenesis site" description="In pho1-6; disruptionDisruption of Pi accumulation." evidence="12">
    <original>A</original>
    <variation>T</variation>
    <location>
        <position position="312"/>
    </location>
</feature>
<feature type="mutagenesis site" description="In KSC; decreased Pi content and reduced growth; when associated with A-318 and A-322." evidence="15">
    <original>K</original>
    <variation>A</variation>
    <location>
        <position position="315"/>
    </location>
</feature>
<feature type="mutagenesis site" description="In KSC; decreased Pi content and reduced growth; when associated with A-315 and A-322." evidence="15">
    <original>K</original>
    <variation>A</variation>
    <location>
        <position position="318"/>
    </location>
</feature>
<feature type="mutagenesis site" description="In PBC; decreased Pi content and reduced growth; when associated with F-23 and A-27." evidence="15">
    <original>K</original>
    <variation>A</variation>
    <location>
        <position position="319"/>
    </location>
</feature>
<feature type="mutagenesis site" description="In KSC; decreased Pi content and reduced growth; when associated with A-315 and A-318." evidence="15">
    <original>K</original>
    <variation>A</variation>
    <location>
        <position position="322"/>
    </location>
</feature>